<keyword id="KW-0342">GTP-binding</keyword>
<keyword id="KW-0547">Nucleotide-binding</keyword>
<keyword id="KW-1185">Reference proteome</keyword>
<keyword id="KW-0677">Repeat</keyword>
<keyword id="KW-0690">Ribosome biogenesis</keyword>
<proteinExistence type="inferred from homology"/>
<dbReference type="EMBL" id="U00089">
    <property type="protein sequence ID" value="AAG34744.1"/>
    <property type="molecule type" value="Genomic_DNA"/>
</dbReference>
<dbReference type="PIR" id="S73692">
    <property type="entry name" value="S73692"/>
</dbReference>
<dbReference type="RefSeq" id="NP_110163.1">
    <property type="nucleotide sequence ID" value="NC_000912.1"/>
</dbReference>
<dbReference type="RefSeq" id="WP_010874831.1">
    <property type="nucleotide sequence ID" value="NZ_OU342337.1"/>
</dbReference>
<dbReference type="SMR" id="P75309"/>
<dbReference type="IntAct" id="P75309">
    <property type="interactions" value="1"/>
</dbReference>
<dbReference type="STRING" id="272634.MPN_475"/>
<dbReference type="EnsemblBacteria" id="AAG34744">
    <property type="protein sequence ID" value="AAG34744"/>
    <property type="gene ID" value="MPN_475"/>
</dbReference>
<dbReference type="GeneID" id="66608852"/>
<dbReference type="KEGG" id="mpn:MPN_475"/>
<dbReference type="PATRIC" id="fig|272634.6.peg.514"/>
<dbReference type="HOGENOM" id="CLU_016077_6_2_14"/>
<dbReference type="OrthoDB" id="9805918at2"/>
<dbReference type="BioCyc" id="MPNE272634:G1GJ3-781-MONOMER"/>
<dbReference type="Proteomes" id="UP000000808">
    <property type="component" value="Chromosome"/>
</dbReference>
<dbReference type="GO" id="GO:0005525">
    <property type="term" value="F:GTP binding"/>
    <property type="evidence" value="ECO:0007669"/>
    <property type="project" value="UniProtKB-UniRule"/>
</dbReference>
<dbReference type="GO" id="GO:0043022">
    <property type="term" value="F:ribosome binding"/>
    <property type="evidence" value="ECO:0007669"/>
    <property type="project" value="TreeGrafter"/>
</dbReference>
<dbReference type="GO" id="GO:0042254">
    <property type="term" value="P:ribosome biogenesis"/>
    <property type="evidence" value="ECO:0007669"/>
    <property type="project" value="UniProtKB-KW"/>
</dbReference>
<dbReference type="CDD" id="cd01894">
    <property type="entry name" value="EngA1"/>
    <property type="match status" value="1"/>
</dbReference>
<dbReference type="CDD" id="cd01895">
    <property type="entry name" value="EngA2"/>
    <property type="match status" value="1"/>
</dbReference>
<dbReference type="FunFam" id="3.30.300.20:FF:000004">
    <property type="entry name" value="GTPase Der"/>
    <property type="match status" value="1"/>
</dbReference>
<dbReference type="FunFam" id="3.40.50.300:FF:000040">
    <property type="entry name" value="GTPase Der"/>
    <property type="match status" value="1"/>
</dbReference>
<dbReference type="Gene3D" id="3.30.300.20">
    <property type="match status" value="1"/>
</dbReference>
<dbReference type="Gene3D" id="3.40.50.300">
    <property type="entry name" value="P-loop containing nucleotide triphosphate hydrolases"/>
    <property type="match status" value="2"/>
</dbReference>
<dbReference type="HAMAP" id="MF_00195">
    <property type="entry name" value="GTPase_Der"/>
    <property type="match status" value="1"/>
</dbReference>
<dbReference type="InterPro" id="IPR031166">
    <property type="entry name" value="G_ENGA"/>
</dbReference>
<dbReference type="InterPro" id="IPR006073">
    <property type="entry name" value="GTP-bd"/>
</dbReference>
<dbReference type="InterPro" id="IPR016484">
    <property type="entry name" value="GTPase_Der"/>
</dbReference>
<dbReference type="InterPro" id="IPR032859">
    <property type="entry name" value="KH_dom-like"/>
</dbReference>
<dbReference type="InterPro" id="IPR015946">
    <property type="entry name" value="KH_dom-like_a/b"/>
</dbReference>
<dbReference type="InterPro" id="IPR027417">
    <property type="entry name" value="P-loop_NTPase"/>
</dbReference>
<dbReference type="InterPro" id="IPR005225">
    <property type="entry name" value="Small_GTP-bd"/>
</dbReference>
<dbReference type="NCBIfam" id="TIGR03594">
    <property type="entry name" value="GTPase_EngA"/>
    <property type="match status" value="1"/>
</dbReference>
<dbReference type="NCBIfam" id="TIGR00231">
    <property type="entry name" value="small_GTP"/>
    <property type="match status" value="2"/>
</dbReference>
<dbReference type="PANTHER" id="PTHR43834">
    <property type="entry name" value="GTPASE DER"/>
    <property type="match status" value="1"/>
</dbReference>
<dbReference type="PANTHER" id="PTHR43834:SF6">
    <property type="entry name" value="GTPASE DER"/>
    <property type="match status" value="1"/>
</dbReference>
<dbReference type="Pfam" id="PF14714">
    <property type="entry name" value="KH_dom-like"/>
    <property type="match status" value="1"/>
</dbReference>
<dbReference type="Pfam" id="PF01926">
    <property type="entry name" value="MMR_HSR1"/>
    <property type="match status" value="2"/>
</dbReference>
<dbReference type="PIRSF" id="PIRSF006485">
    <property type="entry name" value="GTP-binding_EngA"/>
    <property type="match status" value="1"/>
</dbReference>
<dbReference type="SUPFAM" id="SSF52540">
    <property type="entry name" value="P-loop containing nucleoside triphosphate hydrolases"/>
    <property type="match status" value="2"/>
</dbReference>
<dbReference type="PROSITE" id="PS51712">
    <property type="entry name" value="G_ENGA"/>
    <property type="match status" value="2"/>
</dbReference>
<name>DER_MYCPN</name>
<protein>
    <recommendedName>
        <fullName evidence="1">GTPase Der</fullName>
    </recommendedName>
    <alternativeName>
        <fullName evidence="1">GTP-binding protein EngA</fullName>
    </alternativeName>
</protein>
<comment type="function">
    <text evidence="1">GTPase that plays an essential role in the late steps of ribosome biogenesis.</text>
</comment>
<comment type="subunit">
    <text evidence="1">Associates with the 50S ribosomal subunit.</text>
</comment>
<comment type="similarity">
    <text evidence="1">Belongs to the TRAFAC class TrmE-Era-EngA-EngB-Septin-like GTPase superfamily. EngA (Der) GTPase family.</text>
</comment>
<organism>
    <name type="scientific">Mycoplasma pneumoniae (strain ATCC 29342 / M129 / Subtype 1)</name>
    <name type="common">Mycoplasmoides pneumoniae</name>
    <dbReference type="NCBI Taxonomy" id="272634"/>
    <lineage>
        <taxon>Bacteria</taxon>
        <taxon>Bacillati</taxon>
        <taxon>Mycoplasmatota</taxon>
        <taxon>Mycoplasmoidales</taxon>
        <taxon>Mycoplasmoidaceae</taxon>
        <taxon>Mycoplasmoides</taxon>
    </lineage>
</organism>
<feature type="chain" id="PRO_0000179014" description="GTPase Der">
    <location>
        <begin position="1"/>
        <end position="449"/>
    </location>
</feature>
<feature type="domain" description="EngA-type G 1">
    <location>
        <begin position="2"/>
        <end position="169"/>
    </location>
</feature>
<feature type="domain" description="EngA-type G 2">
    <location>
        <begin position="180"/>
        <end position="355"/>
    </location>
</feature>
<feature type="domain" description="KH-like" evidence="1">
    <location>
        <begin position="356"/>
        <end position="440"/>
    </location>
</feature>
<feature type="binding site" evidence="1">
    <location>
        <begin position="8"/>
        <end position="15"/>
    </location>
    <ligand>
        <name>GTP</name>
        <dbReference type="ChEBI" id="CHEBI:37565"/>
        <label>1</label>
    </ligand>
</feature>
<feature type="binding site" evidence="1">
    <location>
        <begin position="55"/>
        <end position="59"/>
    </location>
    <ligand>
        <name>GTP</name>
        <dbReference type="ChEBI" id="CHEBI:37565"/>
        <label>1</label>
    </ligand>
</feature>
<feature type="binding site" evidence="1">
    <location>
        <begin position="118"/>
        <end position="121"/>
    </location>
    <ligand>
        <name>GTP</name>
        <dbReference type="ChEBI" id="CHEBI:37565"/>
        <label>1</label>
    </ligand>
</feature>
<feature type="binding site" evidence="1">
    <location>
        <begin position="186"/>
        <end position="193"/>
    </location>
    <ligand>
        <name>GTP</name>
        <dbReference type="ChEBI" id="CHEBI:37565"/>
        <label>2</label>
    </ligand>
</feature>
<feature type="binding site" evidence="1">
    <location>
        <begin position="233"/>
        <end position="237"/>
    </location>
    <ligand>
        <name>GTP</name>
        <dbReference type="ChEBI" id="CHEBI:37565"/>
        <label>2</label>
    </ligand>
</feature>
<feature type="binding site" evidence="1">
    <location>
        <begin position="298"/>
        <end position="301"/>
    </location>
    <ligand>
        <name>GTP</name>
        <dbReference type="ChEBI" id="CHEBI:37565"/>
        <label>2</label>
    </ligand>
</feature>
<gene>
    <name evidence="1" type="primary">der</name>
    <name type="synonym">engA</name>
    <name type="ordered locus">MPN_475</name>
    <name type="ORF">MP366</name>
</gene>
<evidence type="ECO:0000255" key="1">
    <source>
        <dbReference type="HAMAP-Rule" id="MF_00195"/>
    </source>
</evidence>
<accession>P75309</accession>
<sequence>MFTVAIIGRPNVGKSSLFNRLIQKPYAIISDTPNTTRDRIYGVGEWLTRQIAFIDTGGLISQKTPLQQQIEVQVRAALSQANAIIFLVSYQEQISSDDFYVAKVLKKIKDKPILLVVNKSENLKPDAYEPNLQQFYSFGFGQPVCVSASHGIGIGNLMDRLVKDNQLPPYHGSSETNPEVRFCVIGKPNVGKSSLINQLVQQNRVLVSDESGTTRDAIDIPLRVNGQNYLLIDTAGIRRKGKIAPGIEAASYGKTQLAIARSNIILLMVDGSKPLSEQDEIIGGLAQAALIPVIILVNKWDLVQKDSNTMAKFKKQLQSQFQHLSFAPIVFISVKNNKRLHTIFEQLQIIQEQLTKKISTSLLNDVIQQAQLFNQAPLFKGGRLQVTYAVQTHSQTPHFVLFCNDPKFVHFSYARFLENKIRESFGFSAVPITLYFKSKNARIRGVAKT</sequence>
<reference key="1">
    <citation type="journal article" date="1996" name="Nucleic Acids Res.">
        <title>Complete sequence analysis of the genome of the bacterium Mycoplasma pneumoniae.</title>
        <authorList>
            <person name="Himmelreich R."/>
            <person name="Hilbert H."/>
            <person name="Plagens H."/>
            <person name="Pirkl E."/>
            <person name="Li B.-C."/>
            <person name="Herrmann R."/>
        </authorList>
    </citation>
    <scope>NUCLEOTIDE SEQUENCE [LARGE SCALE GENOMIC DNA]</scope>
    <source>
        <strain>ATCC 29342 / M129 / Subtype 1</strain>
    </source>
</reference>